<accession>Q22700</accession>
<organism>
    <name type="scientific">Caenorhabditis elegans</name>
    <dbReference type="NCBI Taxonomy" id="6239"/>
    <lineage>
        <taxon>Eukaryota</taxon>
        <taxon>Metazoa</taxon>
        <taxon>Ecdysozoa</taxon>
        <taxon>Nematoda</taxon>
        <taxon>Chromadorea</taxon>
        <taxon>Rhabditida</taxon>
        <taxon>Rhabditina</taxon>
        <taxon>Rhabditomorpha</taxon>
        <taxon>Rhabditoidea</taxon>
        <taxon>Rhabditidae</taxon>
        <taxon>Peloderinae</taxon>
        <taxon>Caenorhabditis</taxon>
    </lineage>
</organism>
<protein>
    <recommendedName>
        <fullName>UPF0057 membrane protein T23F2.3</fullName>
    </recommendedName>
</protein>
<proteinExistence type="inferred from homology"/>
<sequence length="57" mass="6251">MALTCTDIPKFICAVLLPPIGVFLEKGCDYHLAICILLTILGYIPGIIYACYVILAY</sequence>
<name>YCU3_CAEEL</name>
<keyword id="KW-0472">Membrane</keyword>
<keyword id="KW-1185">Reference proteome</keyword>
<keyword id="KW-0812">Transmembrane</keyword>
<keyword id="KW-1133">Transmembrane helix</keyword>
<dbReference type="EMBL" id="FO080954">
    <property type="protein sequence ID" value="CCD68068.1"/>
    <property type="molecule type" value="Genomic_DNA"/>
</dbReference>
<dbReference type="PIR" id="T16928">
    <property type="entry name" value="T16928"/>
</dbReference>
<dbReference type="RefSeq" id="NP_001370601.1">
    <property type="nucleotide sequence ID" value="NM_001383580.2"/>
</dbReference>
<dbReference type="RefSeq" id="NP_508934.1">
    <property type="nucleotide sequence ID" value="NM_076533.5"/>
</dbReference>
<dbReference type="SMR" id="Q22700"/>
<dbReference type="FunCoup" id="Q22700">
    <property type="interactions" value="20"/>
</dbReference>
<dbReference type="PaxDb" id="6239-T23F2.3"/>
<dbReference type="PeptideAtlas" id="Q22700"/>
<dbReference type="EnsemblMetazoa" id="T23F2.3.1">
    <property type="protein sequence ID" value="T23F2.3.1"/>
    <property type="gene ID" value="WBGene00020736"/>
</dbReference>
<dbReference type="GeneID" id="188805"/>
<dbReference type="UCSC" id="T23F2.3">
    <property type="organism name" value="c. elegans"/>
</dbReference>
<dbReference type="AGR" id="WB:WBGene00020736"/>
<dbReference type="WormBase" id="T23F2.3">
    <property type="protein sequence ID" value="CE04998"/>
    <property type="gene ID" value="WBGene00020736"/>
</dbReference>
<dbReference type="eggNOG" id="KOG1773">
    <property type="taxonomic scope" value="Eukaryota"/>
</dbReference>
<dbReference type="GeneTree" id="ENSGT00970000196157"/>
<dbReference type="HOGENOM" id="CLU_107649_6_2_1"/>
<dbReference type="InParanoid" id="Q22700"/>
<dbReference type="OMA" id="EKGCDYH"/>
<dbReference type="OrthoDB" id="2802411at2759"/>
<dbReference type="PhylomeDB" id="Q22700"/>
<dbReference type="PRO" id="PR:Q22700"/>
<dbReference type="Proteomes" id="UP000001940">
    <property type="component" value="Chromosome X"/>
</dbReference>
<dbReference type="Bgee" id="WBGene00020736">
    <property type="expression patterns" value="Expressed in larva and 4 other cell types or tissues"/>
</dbReference>
<dbReference type="GO" id="GO:0016020">
    <property type="term" value="C:membrane"/>
    <property type="evidence" value="ECO:0007669"/>
    <property type="project" value="UniProtKB-SubCell"/>
</dbReference>
<dbReference type="InterPro" id="IPR000612">
    <property type="entry name" value="PMP3"/>
</dbReference>
<dbReference type="PANTHER" id="PTHR21659">
    <property type="entry name" value="HYDROPHOBIC PROTEIN RCI2 LOW TEMPERATURE AND SALT RESPONSIVE PROTEIN LTI6 -RELATED"/>
    <property type="match status" value="1"/>
</dbReference>
<dbReference type="PANTHER" id="PTHR21659:SF5">
    <property type="entry name" value="UPF0057 MEMBRANE PROTEIN T23F2.3-RELATED"/>
    <property type="match status" value="1"/>
</dbReference>
<dbReference type="Pfam" id="PF01679">
    <property type="entry name" value="Pmp3"/>
    <property type="match status" value="1"/>
</dbReference>
<dbReference type="PROSITE" id="PS01309">
    <property type="entry name" value="UPF0057"/>
    <property type="match status" value="1"/>
</dbReference>
<evidence type="ECO:0000255" key="1"/>
<evidence type="ECO:0000305" key="2"/>
<feature type="chain" id="PRO_0000193993" description="UPF0057 membrane protein T23F2.3">
    <location>
        <begin position="1"/>
        <end position="57"/>
    </location>
</feature>
<feature type="transmembrane region" description="Helical" evidence="1">
    <location>
        <begin position="4"/>
        <end position="24"/>
    </location>
</feature>
<feature type="transmembrane region" description="Helical" evidence="1">
    <location>
        <begin position="36"/>
        <end position="56"/>
    </location>
</feature>
<gene>
    <name type="ORF">T23F2.3</name>
</gene>
<reference key="1">
    <citation type="journal article" date="1998" name="Science">
        <title>Genome sequence of the nematode C. elegans: a platform for investigating biology.</title>
        <authorList>
            <consortium name="The C. elegans sequencing consortium"/>
        </authorList>
    </citation>
    <scope>NUCLEOTIDE SEQUENCE [LARGE SCALE GENOMIC DNA]</scope>
    <source>
        <strain>Bristol N2</strain>
    </source>
</reference>
<comment type="subcellular location">
    <subcellularLocation>
        <location evidence="2">Membrane</location>
        <topology evidence="2">Multi-pass membrane protein</topology>
    </subcellularLocation>
</comment>
<comment type="similarity">
    <text evidence="2">Belongs to the UPF0057 (PMP3) family.</text>
</comment>